<name>ETFQO_ORYSJ</name>
<proteinExistence type="inferred from homology"/>
<feature type="transit peptide" description="Mitochondrion" evidence="2">
    <location>
        <begin position="1"/>
        <end position="33"/>
    </location>
</feature>
<feature type="chain" id="PRO_0000424902" description="Electron transfer flavoprotein-ubiquinone oxidoreductase, mitochondrial">
    <location>
        <begin position="34"/>
        <end position="575"/>
    </location>
</feature>
<feature type="intramembrane region" evidence="1">
    <location>
        <begin position="82"/>
        <end position="103"/>
    </location>
</feature>
<feature type="intramembrane region" evidence="1">
    <location>
        <begin position="343"/>
        <end position="363"/>
    </location>
</feature>
<feature type="domain" description="4Fe-4S ferredoxin-type">
    <location>
        <begin position="535"/>
        <end position="564"/>
    </location>
</feature>
<feature type="binding site" evidence="1">
    <location>
        <begin position="44"/>
        <end position="58"/>
    </location>
    <ligand>
        <name>FAD</name>
        <dbReference type="ChEBI" id="CHEBI:57692"/>
    </ligand>
</feature>
<feature type="binding site" evidence="1">
    <location>
        <position position="276"/>
    </location>
    <ligand>
        <name>a ubiquinone</name>
        <dbReference type="ChEBI" id="CHEBI:16389"/>
    </ligand>
</feature>
<feature type="binding site" evidence="1">
    <location>
        <position position="277"/>
    </location>
    <ligand>
        <name>a ubiquinone</name>
        <dbReference type="ChEBI" id="CHEBI:16389"/>
    </ligand>
</feature>
<feature type="binding site" evidence="1">
    <location>
        <position position="520"/>
    </location>
    <ligand>
        <name>[4Fe-4S] cluster</name>
        <dbReference type="ChEBI" id="CHEBI:49883"/>
    </ligand>
</feature>
<feature type="binding site" evidence="1">
    <location>
        <position position="544"/>
    </location>
    <ligand>
        <name>[4Fe-4S] cluster</name>
        <dbReference type="ChEBI" id="CHEBI:49883"/>
    </ligand>
</feature>
<feature type="binding site" evidence="1">
    <location>
        <position position="547"/>
    </location>
    <ligand>
        <name>[4Fe-4S] cluster</name>
        <dbReference type="ChEBI" id="CHEBI:49883"/>
    </ligand>
</feature>
<feature type="binding site" evidence="1">
    <location>
        <position position="550"/>
    </location>
    <ligand>
        <name>[4Fe-4S] cluster</name>
        <dbReference type="ChEBI" id="CHEBI:49883"/>
    </ligand>
</feature>
<sequence>MQRVLRAAAAGIGHASGHRAPRWGAAAAAARWLSGGREAMSYDVVVVGAGPAGLAAAIRLKQLCRDADTDLSVCVLEKGSEVGAHVLSGNVFEPRALDELIPKWRQEDTPIRVPVSSDKFWLLTKNKAWTLPSPFDNKGNYVISLSQMVRWMASKAEELGVEVYPGFAASEILYDENQIVTGVATNDVGIAKDGSKRETFQPGVELRGRMTLLAEGCRGSLSEKIIRNHKLRESGQGQHQTYALGIKEVWEIEEGKHKPGSVIHTVGWPLDSKTYGGSFMYHLDDRQLAIGLVVALNYQNPFMSPYDEFQKFKQHPAVRTILDGGTVLQYGARTLNEGGFQSIPNPVFPGGAIIGCSAGFLNVPKIKGTHTAMKSGMLAAEATFKTLVEGSSMELYWENLKKSWIWEELYRARNYRPAFEYGFIPGIALSALERYVFKGKSPFTLKHGIPDHEATDMASLHSPIQYPKPDGQISFDVPTSLYRSSTNHEHDQPPHLRLRDPTVPERVNLPLYAGPESHYCPARVYEYVTDEKGDQKLHINAQNCLHCKACDIKDPKQNIEWTVPEGGGGPGYTVM</sequence>
<protein>
    <recommendedName>
        <fullName>Electron transfer flavoprotein-ubiquinone oxidoreductase, mitochondrial</fullName>
        <shortName>ETF-QO</shortName>
        <shortName>ETF-ubiquinone oxidoreductase</shortName>
        <ecNumber>1.5.5.1</ecNumber>
    </recommendedName>
</protein>
<dbReference type="EC" id="1.5.5.1"/>
<dbReference type="EMBL" id="AC025296">
    <property type="protein sequence ID" value="AAK39567.1"/>
    <property type="status" value="ALT_INIT"/>
    <property type="molecule type" value="Genomic_DNA"/>
</dbReference>
<dbReference type="EMBL" id="DP000086">
    <property type="protein sequence ID" value="ABB47884.1"/>
    <property type="molecule type" value="Genomic_DNA"/>
</dbReference>
<dbReference type="EMBL" id="AP008216">
    <property type="protein sequence ID" value="BAF26976.1"/>
    <property type="status" value="ALT_SEQ"/>
    <property type="molecule type" value="Genomic_DNA"/>
</dbReference>
<dbReference type="EMBL" id="AP014966">
    <property type="status" value="NOT_ANNOTATED_CDS"/>
    <property type="molecule type" value="Genomic_DNA"/>
</dbReference>
<dbReference type="RefSeq" id="XP_015612721.1">
    <property type="nucleotide sequence ID" value="XM_015757235.1"/>
</dbReference>
<dbReference type="SMR" id="Q337B8"/>
<dbReference type="FunCoup" id="Q337B8">
    <property type="interactions" value="2828"/>
</dbReference>
<dbReference type="STRING" id="39947.Q337B8"/>
<dbReference type="PaxDb" id="39947-Q337B8"/>
<dbReference type="KEGG" id="dosa:Os10g0516300"/>
<dbReference type="eggNOG" id="KOG2415">
    <property type="taxonomic scope" value="Eukaryota"/>
</dbReference>
<dbReference type="InParanoid" id="Q337B8"/>
<dbReference type="OrthoDB" id="437331at2759"/>
<dbReference type="Proteomes" id="UP000000763">
    <property type="component" value="Chromosome 10"/>
</dbReference>
<dbReference type="Proteomes" id="UP000059680">
    <property type="component" value="Chromosome 10"/>
</dbReference>
<dbReference type="GO" id="GO:0005743">
    <property type="term" value="C:mitochondrial inner membrane"/>
    <property type="evidence" value="ECO:0000318"/>
    <property type="project" value="GO_Central"/>
</dbReference>
<dbReference type="GO" id="GO:0004174">
    <property type="term" value="F:electron-transferring-flavoprotein dehydrogenase activity"/>
    <property type="evidence" value="ECO:0000318"/>
    <property type="project" value="GO_Central"/>
</dbReference>
<dbReference type="GO" id="GO:0051536">
    <property type="term" value="F:iron-sulfur cluster binding"/>
    <property type="evidence" value="ECO:0007669"/>
    <property type="project" value="UniProtKB-KW"/>
</dbReference>
<dbReference type="GO" id="GO:0046872">
    <property type="term" value="F:metal ion binding"/>
    <property type="evidence" value="ECO:0007669"/>
    <property type="project" value="UniProtKB-KW"/>
</dbReference>
<dbReference type="GO" id="GO:0022900">
    <property type="term" value="P:electron transport chain"/>
    <property type="evidence" value="ECO:0000318"/>
    <property type="project" value="GO_Central"/>
</dbReference>
<dbReference type="FunFam" id="3.30.70.20:FF:000015">
    <property type="entry name" value="Electron transfer flavoprotein-ubiquinone oxidoreductase"/>
    <property type="match status" value="1"/>
</dbReference>
<dbReference type="Gene3D" id="3.30.70.20">
    <property type="match status" value="1"/>
</dbReference>
<dbReference type="Gene3D" id="3.30.9.90">
    <property type="match status" value="1"/>
</dbReference>
<dbReference type="Gene3D" id="3.50.50.60">
    <property type="entry name" value="FAD/NAD(P)-binding domain"/>
    <property type="match status" value="1"/>
</dbReference>
<dbReference type="InterPro" id="IPR040156">
    <property type="entry name" value="ETF-QO"/>
</dbReference>
<dbReference type="InterPro" id="IPR049398">
    <property type="entry name" value="ETF-QO/FixC_UQ-bd"/>
</dbReference>
<dbReference type="InterPro" id="IPR007859">
    <property type="entry name" value="ETF-QO/FixX_C"/>
</dbReference>
<dbReference type="InterPro" id="IPR036188">
    <property type="entry name" value="FAD/NAD-bd_sf"/>
</dbReference>
<dbReference type="PANTHER" id="PTHR10617">
    <property type="entry name" value="ELECTRON TRANSFER FLAVOPROTEIN-UBIQUINONE OXIDOREDUCTASE"/>
    <property type="match status" value="1"/>
</dbReference>
<dbReference type="PANTHER" id="PTHR10617:SF107">
    <property type="entry name" value="ELECTRON TRANSFER FLAVOPROTEIN-UBIQUINONE OXIDOREDUCTASE, MITOCHONDRIAL"/>
    <property type="match status" value="1"/>
</dbReference>
<dbReference type="Pfam" id="PF21162">
    <property type="entry name" value="ETFQO_UQ-bd"/>
    <property type="match status" value="1"/>
</dbReference>
<dbReference type="Pfam" id="PF05187">
    <property type="entry name" value="Fer4_ETF_QO"/>
    <property type="match status" value="1"/>
</dbReference>
<dbReference type="Pfam" id="PF13450">
    <property type="entry name" value="NAD_binding_8"/>
    <property type="match status" value="1"/>
</dbReference>
<dbReference type="SUPFAM" id="SSF54862">
    <property type="entry name" value="4Fe-4S ferredoxins"/>
    <property type="match status" value="1"/>
</dbReference>
<dbReference type="SUPFAM" id="SSF54373">
    <property type="entry name" value="FAD-linked reductases, C-terminal domain"/>
    <property type="match status" value="1"/>
</dbReference>
<dbReference type="SUPFAM" id="SSF51905">
    <property type="entry name" value="FAD/NAD(P)-binding domain"/>
    <property type="match status" value="1"/>
</dbReference>
<gene>
    <name type="ordered locus">Os10g0516300</name>
    <name type="ordered locus">LOC_Os10g37210</name>
    <name type="ORF">OSJNBa0076F20.3</name>
</gene>
<reference key="1">
    <citation type="journal article" date="2003" name="Science">
        <title>In-depth view of structure, activity, and evolution of rice chromosome 10.</title>
        <authorList>
            <person name="Yu Y."/>
            <person name="Rambo T."/>
            <person name="Currie J."/>
            <person name="Saski C."/>
            <person name="Kim H.-R."/>
            <person name="Collura K."/>
            <person name="Thompson S."/>
            <person name="Simmons J."/>
            <person name="Yang T.-J."/>
            <person name="Nah G."/>
            <person name="Patel A.J."/>
            <person name="Thurmond S."/>
            <person name="Henry D."/>
            <person name="Oates R."/>
            <person name="Palmer M."/>
            <person name="Pries G."/>
            <person name="Gibson J."/>
            <person name="Anderson H."/>
            <person name="Paradkar M."/>
            <person name="Crane L."/>
            <person name="Dale J."/>
            <person name="Carver M.B."/>
            <person name="Wood T."/>
            <person name="Frisch D."/>
            <person name="Engler F."/>
            <person name="Soderlund C."/>
            <person name="Palmer L.E."/>
            <person name="Teytelman L."/>
            <person name="Nascimento L."/>
            <person name="De la Bastide M."/>
            <person name="Spiegel L."/>
            <person name="Ware D."/>
            <person name="O'Shaughnessy A."/>
            <person name="Dike S."/>
            <person name="Dedhia N."/>
            <person name="Preston R."/>
            <person name="Huang E."/>
            <person name="Ferraro K."/>
            <person name="Kuit K."/>
            <person name="Miller B."/>
            <person name="Zutavern T."/>
            <person name="Katzenberger F."/>
            <person name="Muller S."/>
            <person name="Balija V."/>
            <person name="Martienssen R.A."/>
            <person name="Stein L."/>
            <person name="Minx P."/>
            <person name="Johnson D."/>
            <person name="Cordum H."/>
            <person name="Mardis E."/>
            <person name="Cheng Z."/>
            <person name="Jiang J."/>
            <person name="Wilson R."/>
            <person name="McCombie W.R."/>
            <person name="Wing R.A."/>
            <person name="Yuan Q."/>
            <person name="Ouyang S."/>
            <person name="Liu J."/>
            <person name="Jones K.M."/>
            <person name="Gansberger K."/>
            <person name="Moffat K."/>
            <person name="Hill J."/>
            <person name="Tsitrin T."/>
            <person name="Overton L."/>
            <person name="Bera J."/>
            <person name="Kim M."/>
            <person name="Jin S."/>
            <person name="Tallon L."/>
            <person name="Ciecko A."/>
            <person name="Pai G."/>
            <person name="Van Aken S."/>
            <person name="Utterback T."/>
            <person name="Reidmuller S."/>
            <person name="Bormann J."/>
            <person name="Feldblyum T."/>
            <person name="Hsiao J."/>
            <person name="Zismann V."/>
            <person name="Blunt S."/>
            <person name="de Vazeille A.R."/>
            <person name="Shaffer T."/>
            <person name="Koo H."/>
            <person name="Suh B."/>
            <person name="Yang Q."/>
            <person name="Haas B."/>
            <person name="Peterson J."/>
            <person name="Pertea M."/>
            <person name="Volfovsky N."/>
            <person name="Wortman J."/>
            <person name="White O."/>
            <person name="Salzberg S.L."/>
            <person name="Fraser C.M."/>
            <person name="Buell C.R."/>
            <person name="Messing J."/>
            <person name="Song R."/>
            <person name="Fuks G."/>
            <person name="Llaca V."/>
            <person name="Kovchak S."/>
            <person name="Young S."/>
            <person name="Bowers J.E."/>
            <person name="Paterson A.H."/>
            <person name="Johns M.A."/>
            <person name="Mao L."/>
            <person name="Pan H."/>
            <person name="Dean R.A."/>
        </authorList>
    </citation>
    <scope>NUCLEOTIDE SEQUENCE [LARGE SCALE GENOMIC DNA]</scope>
    <source>
        <strain>cv. Nipponbare</strain>
    </source>
</reference>
<reference key="2">
    <citation type="journal article" date="2005" name="Nature">
        <title>The map-based sequence of the rice genome.</title>
        <authorList>
            <consortium name="International rice genome sequencing project (IRGSP)"/>
        </authorList>
    </citation>
    <scope>NUCLEOTIDE SEQUENCE [LARGE SCALE GENOMIC DNA]</scope>
    <source>
        <strain>cv. Nipponbare</strain>
    </source>
</reference>
<reference key="3">
    <citation type="journal article" date="2008" name="Nucleic Acids Res.">
        <title>The rice annotation project database (RAP-DB): 2008 update.</title>
        <authorList>
            <consortium name="The rice annotation project (RAP)"/>
        </authorList>
    </citation>
    <scope>GENOME REANNOTATION</scope>
    <source>
        <strain>cv. Nipponbare</strain>
    </source>
</reference>
<reference key="4">
    <citation type="journal article" date="2013" name="Rice">
        <title>Improvement of the Oryza sativa Nipponbare reference genome using next generation sequence and optical map data.</title>
        <authorList>
            <person name="Kawahara Y."/>
            <person name="de la Bastide M."/>
            <person name="Hamilton J.P."/>
            <person name="Kanamori H."/>
            <person name="McCombie W.R."/>
            <person name="Ouyang S."/>
            <person name="Schwartz D.C."/>
            <person name="Tanaka T."/>
            <person name="Wu J."/>
            <person name="Zhou S."/>
            <person name="Childs K.L."/>
            <person name="Davidson R.M."/>
            <person name="Lin H."/>
            <person name="Quesada-Ocampo L."/>
            <person name="Vaillancourt B."/>
            <person name="Sakai H."/>
            <person name="Lee S.S."/>
            <person name="Kim J."/>
            <person name="Numa H."/>
            <person name="Itoh T."/>
            <person name="Buell C.R."/>
            <person name="Matsumoto T."/>
        </authorList>
    </citation>
    <scope>GENOME REANNOTATION</scope>
    <source>
        <strain>cv. Nipponbare</strain>
    </source>
</reference>
<keyword id="KW-0249">Electron transport</keyword>
<keyword id="KW-0274">FAD</keyword>
<keyword id="KW-0285">Flavoprotein</keyword>
<keyword id="KW-0408">Iron</keyword>
<keyword id="KW-0411">Iron-sulfur</keyword>
<keyword id="KW-0472">Membrane</keyword>
<keyword id="KW-0479">Metal-binding</keyword>
<keyword id="KW-0496">Mitochondrion</keyword>
<keyword id="KW-0999">Mitochondrion inner membrane</keyword>
<keyword id="KW-0560">Oxidoreductase</keyword>
<keyword id="KW-1185">Reference proteome</keyword>
<keyword id="KW-0809">Transit peptide</keyword>
<keyword id="KW-0813">Transport</keyword>
<keyword id="KW-0830">Ubiquinone</keyword>
<evidence type="ECO:0000250" key="1"/>
<evidence type="ECO:0000255" key="2"/>
<evidence type="ECO:0000305" key="3"/>
<comment type="function">
    <text evidence="1">Accepts electrons from ETF and reduces ubiquinone.</text>
</comment>
<comment type="catalytic activity">
    <reaction>
        <text>a ubiquinone + reduced [electron-transfer flavoprotein] = a ubiquinol + oxidized [electron-transfer flavoprotein] + H(+)</text>
        <dbReference type="Rhea" id="RHEA:24052"/>
        <dbReference type="Rhea" id="RHEA-COMP:9565"/>
        <dbReference type="Rhea" id="RHEA-COMP:9566"/>
        <dbReference type="Rhea" id="RHEA-COMP:10685"/>
        <dbReference type="Rhea" id="RHEA-COMP:10686"/>
        <dbReference type="ChEBI" id="CHEBI:15378"/>
        <dbReference type="ChEBI" id="CHEBI:16389"/>
        <dbReference type="ChEBI" id="CHEBI:17976"/>
        <dbReference type="ChEBI" id="CHEBI:57692"/>
        <dbReference type="ChEBI" id="CHEBI:58307"/>
        <dbReference type="EC" id="1.5.5.1"/>
    </reaction>
</comment>
<comment type="cofactor">
    <cofactor evidence="1">
        <name>[4Fe-4S] cluster</name>
        <dbReference type="ChEBI" id="CHEBI:49883"/>
    </cofactor>
    <text evidence="1">Binds 1 [4Fe-4S] cluster.</text>
</comment>
<comment type="cofactor">
    <cofactor evidence="1">
        <name>FAD</name>
        <dbReference type="ChEBI" id="CHEBI:57692"/>
    </cofactor>
</comment>
<comment type="subcellular location">
    <subcellularLocation>
        <location evidence="1">Mitochondrion inner membrane</location>
    </subcellularLocation>
</comment>
<comment type="similarity">
    <text evidence="3">Belongs to the ETF-QO/FixC family.</text>
</comment>
<comment type="sequence caution" evidence="3">
    <conflict type="erroneous initiation">
        <sequence resource="EMBL-CDS" id="AAK39567"/>
    </conflict>
    <text>Truncated N-terminus.</text>
</comment>
<comment type="sequence caution" evidence="3">
    <conflict type="erroneous gene model prediction">
        <sequence resource="EMBL-CDS" id="BAF26976"/>
    </conflict>
</comment>
<organism>
    <name type="scientific">Oryza sativa subsp. japonica</name>
    <name type="common">Rice</name>
    <dbReference type="NCBI Taxonomy" id="39947"/>
    <lineage>
        <taxon>Eukaryota</taxon>
        <taxon>Viridiplantae</taxon>
        <taxon>Streptophyta</taxon>
        <taxon>Embryophyta</taxon>
        <taxon>Tracheophyta</taxon>
        <taxon>Spermatophyta</taxon>
        <taxon>Magnoliopsida</taxon>
        <taxon>Liliopsida</taxon>
        <taxon>Poales</taxon>
        <taxon>Poaceae</taxon>
        <taxon>BOP clade</taxon>
        <taxon>Oryzoideae</taxon>
        <taxon>Oryzeae</taxon>
        <taxon>Oryzinae</taxon>
        <taxon>Oryza</taxon>
        <taxon>Oryza sativa</taxon>
    </lineage>
</organism>
<accession>Q337B8</accession>
<accession>Q0IWD9</accession>
<accession>Q94HZ6</accession>